<organism>
    <name type="scientific">Coxiella burnetii (strain RSA 331 / Henzerling II)</name>
    <dbReference type="NCBI Taxonomy" id="360115"/>
    <lineage>
        <taxon>Bacteria</taxon>
        <taxon>Pseudomonadati</taxon>
        <taxon>Pseudomonadota</taxon>
        <taxon>Gammaproteobacteria</taxon>
        <taxon>Legionellales</taxon>
        <taxon>Coxiellaceae</taxon>
        <taxon>Coxiella</taxon>
    </lineage>
</organism>
<proteinExistence type="inferred from homology"/>
<reference key="1">
    <citation type="submission" date="2007-11" db="EMBL/GenBank/DDBJ databases">
        <title>Genome sequencing of phylogenetically and phenotypically diverse Coxiella burnetii isolates.</title>
        <authorList>
            <person name="Seshadri R."/>
            <person name="Samuel J.E."/>
        </authorList>
    </citation>
    <scope>NUCLEOTIDE SEQUENCE [LARGE SCALE GENOMIC DNA]</scope>
    <source>
        <strain>RSA 331 / Henzerling II</strain>
    </source>
</reference>
<dbReference type="EC" id="1.1.1.25" evidence="1"/>
<dbReference type="EMBL" id="CP000890">
    <property type="protein sequence ID" value="ABX77620.1"/>
    <property type="molecule type" value="Genomic_DNA"/>
</dbReference>
<dbReference type="RefSeq" id="WP_010957324.1">
    <property type="nucleotide sequence ID" value="NC_010117.1"/>
</dbReference>
<dbReference type="SMR" id="A9NBH0"/>
<dbReference type="KEGG" id="cbs:COXBURSA331_A2191"/>
<dbReference type="HOGENOM" id="CLU_044063_2_1_6"/>
<dbReference type="UniPathway" id="UPA00053">
    <property type="reaction ID" value="UER00087"/>
</dbReference>
<dbReference type="GO" id="GO:0005829">
    <property type="term" value="C:cytosol"/>
    <property type="evidence" value="ECO:0007669"/>
    <property type="project" value="TreeGrafter"/>
</dbReference>
<dbReference type="GO" id="GO:0050661">
    <property type="term" value="F:NADP binding"/>
    <property type="evidence" value="ECO:0007669"/>
    <property type="project" value="InterPro"/>
</dbReference>
<dbReference type="GO" id="GO:0004764">
    <property type="term" value="F:shikimate 3-dehydrogenase (NADP+) activity"/>
    <property type="evidence" value="ECO:0007669"/>
    <property type="project" value="UniProtKB-UniRule"/>
</dbReference>
<dbReference type="GO" id="GO:0008652">
    <property type="term" value="P:amino acid biosynthetic process"/>
    <property type="evidence" value="ECO:0007669"/>
    <property type="project" value="UniProtKB-KW"/>
</dbReference>
<dbReference type="GO" id="GO:0009073">
    <property type="term" value="P:aromatic amino acid family biosynthetic process"/>
    <property type="evidence" value="ECO:0007669"/>
    <property type="project" value="UniProtKB-KW"/>
</dbReference>
<dbReference type="GO" id="GO:0009423">
    <property type="term" value="P:chorismate biosynthetic process"/>
    <property type="evidence" value="ECO:0007669"/>
    <property type="project" value="UniProtKB-UniRule"/>
</dbReference>
<dbReference type="GO" id="GO:0019632">
    <property type="term" value="P:shikimate metabolic process"/>
    <property type="evidence" value="ECO:0007669"/>
    <property type="project" value="InterPro"/>
</dbReference>
<dbReference type="CDD" id="cd01065">
    <property type="entry name" value="NAD_bind_Shikimate_DH"/>
    <property type="match status" value="1"/>
</dbReference>
<dbReference type="FunFam" id="3.40.50.10860:FF:000006">
    <property type="entry name" value="Shikimate dehydrogenase (NADP(+))"/>
    <property type="match status" value="1"/>
</dbReference>
<dbReference type="FunFam" id="3.40.50.720:FF:000104">
    <property type="entry name" value="Shikimate dehydrogenase (NADP(+))"/>
    <property type="match status" value="1"/>
</dbReference>
<dbReference type="Gene3D" id="3.40.50.10860">
    <property type="entry name" value="Leucine Dehydrogenase, chain A, domain 1"/>
    <property type="match status" value="1"/>
</dbReference>
<dbReference type="Gene3D" id="3.40.50.720">
    <property type="entry name" value="NAD(P)-binding Rossmann-like Domain"/>
    <property type="match status" value="1"/>
</dbReference>
<dbReference type="HAMAP" id="MF_00222">
    <property type="entry name" value="Shikimate_DH_AroE"/>
    <property type="match status" value="1"/>
</dbReference>
<dbReference type="InterPro" id="IPR046346">
    <property type="entry name" value="Aminoacid_DH-like_N_sf"/>
</dbReference>
<dbReference type="InterPro" id="IPR036291">
    <property type="entry name" value="NAD(P)-bd_dom_sf"/>
</dbReference>
<dbReference type="InterPro" id="IPR011342">
    <property type="entry name" value="Shikimate_DH"/>
</dbReference>
<dbReference type="InterPro" id="IPR013708">
    <property type="entry name" value="Shikimate_DH-bd_N"/>
</dbReference>
<dbReference type="InterPro" id="IPR022893">
    <property type="entry name" value="Shikimate_DH_fam"/>
</dbReference>
<dbReference type="InterPro" id="IPR006151">
    <property type="entry name" value="Shikm_DH/Glu-tRNA_Rdtase"/>
</dbReference>
<dbReference type="NCBIfam" id="TIGR00507">
    <property type="entry name" value="aroE"/>
    <property type="match status" value="1"/>
</dbReference>
<dbReference type="NCBIfam" id="NF001310">
    <property type="entry name" value="PRK00258.1-2"/>
    <property type="match status" value="1"/>
</dbReference>
<dbReference type="PANTHER" id="PTHR21089:SF1">
    <property type="entry name" value="BIFUNCTIONAL 3-DEHYDROQUINATE DEHYDRATASE_SHIKIMATE DEHYDROGENASE, CHLOROPLASTIC"/>
    <property type="match status" value="1"/>
</dbReference>
<dbReference type="PANTHER" id="PTHR21089">
    <property type="entry name" value="SHIKIMATE DEHYDROGENASE"/>
    <property type="match status" value="1"/>
</dbReference>
<dbReference type="Pfam" id="PF01488">
    <property type="entry name" value="Shikimate_DH"/>
    <property type="match status" value="1"/>
</dbReference>
<dbReference type="Pfam" id="PF08501">
    <property type="entry name" value="Shikimate_dh_N"/>
    <property type="match status" value="1"/>
</dbReference>
<dbReference type="SUPFAM" id="SSF53223">
    <property type="entry name" value="Aminoacid dehydrogenase-like, N-terminal domain"/>
    <property type="match status" value="1"/>
</dbReference>
<dbReference type="SUPFAM" id="SSF51735">
    <property type="entry name" value="NAD(P)-binding Rossmann-fold domains"/>
    <property type="match status" value="1"/>
</dbReference>
<comment type="function">
    <text evidence="1">Involved in the biosynthesis of the chorismate, which leads to the biosynthesis of aromatic amino acids. Catalyzes the reversible NADPH linked reduction of 3-dehydroshikimate (DHSA) to yield shikimate (SA).</text>
</comment>
<comment type="catalytic activity">
    <reaction evidence="1">
        <text>shikimate + NADP(+) = 3-dehydroshikimate + NADPH + H(+)</text>
        <dbReference type="Rhea" id="RHEA:17737"/>
        <dbReference type="ChEBI" id="CHEBI:15378"/>
        <dbReference type="ChEBI" id="CHEBI:16630"/>
        <dbReference type="ChEBI" id="CHEBI:36208"/>
        <dbReference type="ChEBI" id="CHEBI:57783"/>
        <dbReference type="ChEBI" id="CHEBI:58349"/>
        <dbReference type="EC" id="1.1.1.25"/>
    </reaction>
</comment>
<comment type="pathway">
    <text evidence="1">Metabolic intermediate biosynthesis; chorismate biosynthesis; chorismate from D-erythrose 4-phosphate and phosphoenolpyruvate: step 4/7.</text>
</comment>
<comment type="subunit">
    <text evidence="1">Homodimer.</text>
</comment>
<comment type="similarity">
    <text evidence="1">Belongs to the shikimate dehydrogenase family.</text>
</comment>
<name>AROE_COXBR</name>
<keyword id="KW-0028">Amino-acid biosynthesis</keyword>
<keyword id="KW-0057">Aromatic amino acid biosynthesis</keyword>
<keyword id="KW-0521">NADP</keyword>
<keyword id="KW-0560">Oxidoreductase</keyword>
<accession>A9NBH0</accession>
<feature type="chain" id="PRO_1000078118" description="Shikimate dehydrogenase (NADP(+))">
    <location>
        <begin position="1"/>
        <end position="272"/>
    </location>
</feature>
<feature type="active site" description="Proton acceptor" evidence="1">
    <location>
        <position position="65"/>
    </location>
</feature>
<feature type="binding site" evidence="1">
    <location>
        <begin position="14"/>
        <end position="16"/>
    </location>
    <ligand>
        <name>shikimate</name>
        <dbReference type="ChEBI" id="CHEBI:36208"/>
    </ligand>
</feature>
<feature type="binding site" evidence="1">
    <location>
        <position position="61"/>
    </location>
    <ligand>
        <name>shikimate</name>
        <dbReference type="ChEBI" id="CHEBI:36208"/>
    </ligand>
</feature>
<feature type="binding site" evidence="1">
    <location>
        <position position="102"/>
    </location>
    <ligand>
        <name>shikimate</name>
        <dbReference type="ChEBI" id="CHEBI:36208"/>
    </ligand>
</feature>
<feature type="binding site" evidence="1">
    <location>
        <begin position="127"/>
        <end position="131"/>
    </location>
    <ligand>
        <name>NADP(+)</name>
        <dbReference type="ChEBI" id="CHEBI:58349"/>
    </ligand>
</feature>
<feature type="binding site" evidence="1">
    <location>
        <begin position="151"/>
        <end position="156"/>
    </location>
    <ligand>
        <name>NADP(+)</name>
        <dbReference type="ChEBI" id="CHEBI:58349"/>
    </ligand>
</feature>
<feature type="binding site" evidence="1">
    <location>
        <position position="215"/>
    </location>
    <ligand>
        <name>NADP(+)</name>
        <dbReference type="ChEBI" id="CHEBI:58349"/>
    </ligand>
</feature>
<feature type="binding site" evidence="1">
    <location>
        <position position="217"/>
    </location>
    <ligand>
        <name>shikimate</name>
        <dbReference type="ChEBI" id="CHEBI:36208"/>
    </ligand>
</feature>
<feature type="binding site" evidence="1">
    <location>
        <position position="239"/>
    </location>
    <ligand>
        <name>NADP(+)</name>
        <dbReference type="ChEBI" id="CHEBI:58349"/>
    </ligand>
</feature>
<evidence type="ECO:0000255" key="1">
    <source>
        <dbReference type="HAMAP-Rule" id="MF_00222"/>
    </source>
</evidence>
<protein>
    <recommendedName>
        <fullName evidence="1">Shikimate dehydrogenase (NADP(+))</fullName>
        <shortName evidence="1">SDH</shortName>
        <ecNumber evidence="1">1.1.1.25</ecNumber>
    </recommendedName>
</protein>
<gene>
    <name evidence="1" type="primary">aroE</name>
    <name type="ordered locus">COXBURSA331_A2191</name>
</gene>
<sequence>MDKYAVIGNPVEHSLSPVIFQAFEKQTNHSFDYLKIKAPVNGFAAAVKKFHDEGGKGANITLPFKEEAYQLADKRSQEANEAHVASALQFREDGTIYAVNYDGLGLVQDLTRNHNITLTQKSILIVGAGGATRGILGPLLNAAPEKIVIVNRTPSKAHALAKIFHLRGEIQGGGFDELEPMRYDVIIHATSLGHQGKFPPLPDGLIGSQSCCYDLSYGKIASPFLQWAKDQGAKYNFDGLGMLVEHNAAVFYLWFGIYPDTNPVIEMLQAHL</sequence>